<sequence length="350" mass="39092">MSKNKLSKGQQRRVQANHQRRLRTDRKPELDDSQLGDAQEGIVISRFGQHADVEAVDGTQHRCNIRRTIKSLVTGDRVVWRPGLQAQEGVRVKGIVEAVHERTSVLTRPDLYDGVKPIAANIDQIVIVSAILPELSLNIIDRYLVACETLEVEPLIVLNKIDLLDADGRKFVDGMMDIYRRIGYDVLEVSSQTREGMEAFENALTGRISIFAGQSGVGKSSLLNALLPPTDNEILVNTVSGNSGLGQHTTTAARLYHFQHGGDVIDSPGVREFGLWHLAPEQITQGFVEFRDYLGHCKFRDCSHTNDPGCALREAVEQGKIAEERFDNYHRILESMEQAKPRKTSDSDEK</sequence>
<name>RSGA_YERPS</name>
<feature type="chain" id="PRO_1000188163" description="Small ribosomal subunit biogenesis GTPase RsgA">
    <location>
        <begin position="1"/>
        <end position="350"/>
    </location>
</feature>
<feature type="domain" description="CP-type G" evidence="2">
    <location>
        <begin position="103"/>
        <end position="273"/>
    </location>
</feature>
<feature type="region of interest" description="Disordered" evidence="3">
    <location>
        <begin position="1"/>
        <end position="35"/>
    </location>
</feature>
<feature type="compositionally biased region" description="Polar residues" evidence="3">
    <location>
        <begin position="1"/>
        <end position="17"/>
    </location>
</feature>
<feature type="binding site" evidence="1">
    <location>
        <begin position="159"/>
        <end position="162"/>
    </location>
    <ligand>
        <name>GTP</name>
        <dbReference type="ChEBI" id="CHEBI:37565"/>
    </ligand>
</feature>
<feature type="binding site" evidence="1">
    <location>
        <begin position="213"/>
        <end position="221"/>
    </location>
    <ligand>
        <name>GTP</name>
        <dbReference type="ChEBI" id="CHEBI:37565"/>
    </ligand>
</feature>
<feature type="binding site" evidence="1">
    <location>
        <position position="297"/>
    </location>
    <ligand>
        <name>Zn(2+)</name>
        <dbReference type="ChEBI" id="CHEBI:29105"/>
    </ligand>
</feature>
<feature type="binding site" evidence="1">
    <location>
        <position position="302"/>
    </location>
    <ligand>
        <name>Zn(2+)</name>
        <dbReference type="ChEBI" id="CHEBI:29105"/>
    </ligand>
</feature>
<feature type="binding site" evidence="1">
    <location>
        <position position="304"/>
    </location>
    <ligand>
        <name>Zn(2+)</name>
        <dbReference type="ChEBI" id="CHEBI:29105"/>
    </ligand>
</feature>
<feature type="binding site" evidence="1">
    <location>
        <position position="310"/>
    </location>
    <ligand>
        <name>Zn(2+)</name>
        <dbReference type="ChEBI" id="CHEBI:29105"/>
    </ligand>
</feature>
<protein>
    <recommendedName>
        <fullName evidence="1">Small ribosomal subunit biogenesis GTPase RsgA</fullName>
        <ecNumber evidence="1">3.6.1.-</ecNumber>
    </recommendedName>
</protein>
<comment type="function">
    <text evidence="1">One of several proteins that assist in the late maturation steps of the functional core of the 30S ribosomal subunit. Helps release RbfA from mature subunits. May play a role in the assembly of ribosomal proteins into the subunit. Circularly permuted GTPase that catalyzes slow GTP hydrolysis, GTPase activity is stimulated by the 30S ribosomal subunit.</text>
</comment>
<comment type="cofactor">
    <cofactor evidence="1">
        <name>Zn(2+)</name>
        <dbReference type="ChEBI" id="CHEBI:29105"/>
    </cofactor>
    <text evidence="1">Binds 1 zinc ion per subunit.</text>
</comment>
<comment type="subunit">
    <text evidence="1">Monomer. Associates with 30S ribosomal subunit, binds 16S rRNA.</text>
</comment>
<comment type="subcellular location">
    <subcellularLocation>
        <location evidence="1">Cytoplasm</location>
    </subcellularLocation>
</comment>
<comment type="similarity">
    <text evidence="1">Belongs to the TRAFAC class YlqF/YawG GTPase family. RsgA subfamily.</text>
</comment>
<gene>
    <name evidence="1" type="primary">rsgA</name>
    <name type="ordered locus">YPTB0417</name>
</gene>
<reference key="1">
    <citation type="journal article" date="2004" name="Proc. Natl. Acad. Sci. U.S.A.">
        <title>Insights into the evolution of Yersinia pestis through whole-genome comparison with Yersinia pseudotuberculosis.</title>
        <authorList>
            <person name="Chain P.S.G."/>
            <person name="Carniel E."/>
            <person name="Larimer F.W."/>
            <person name="Lamerdin J."/>
            <person name="Stoutland P.O."/>
            <person name="Regala W.M."/>
            <person name="Georgescu A.M."/>
            <person name="Vergez L.M."/>
            <person name="Land M.L."/>
            <person name="Motin V.L."/>
            <person name="Brubaker R.R."/>
            <person name="Fowler J."/>
            <person name="Hinnebusch J."/>
            <person name="Marceau M."/>
            <person name="Medigue C."/>
            <person name="Simonet M."/>
            <person name="Chenal-Francisque V."/>
            <person name="Souza B."/>
            <person name="Dacheux D."/>
            <person name="Elliott J.M."/>
            <person name="Derbise A."/>
            <person name="Hauser L.J."/>
            <person name="Garcia E."/>
        </authorList>
    </citation>
    <scope>NUCLEOTIDE SEQUENCE [LARGE SCALE GENOMIC DNA]</scope>
    <source>
        <strain>IP32953</strain>
    </source>
</reference>
<proteinExistence type="inferred from homology"/>
<accession>Q66FC3</accession>
<organism>
    <name type="scientific">Yersinia pseudotuberculosis serotype I (strain IP32953)</name>
    <dbReference type="NCBI Taxonomy" id="273123"/>
    <lineage>
        <taxon>Bacteria</taxon>
        <taxon>Pseudomonadati</taxon>
        <taxon>Pseudomonadota</taxon>
        <taxon>Gammaproteobacteria</taxon>
        <taxon>Enterobacterales</taxon>
        <taxon>Yersiniaceae</taxon>
        <taxon>Yersinia</taxon>
    </lineage>
</organism>
<keyword id="KW-0963">Cytoplasm</keyword>
<keyword id="KW-0342">GTP-binding</keyword>
<keyword id="KW-0378">Hydrolase</keyword>
<keyword id="KW-0479">Metal-binding</keyword>
<keyword id="KW-0547">Nucleotide-binding</keyword>
<keyword id="KW-0690">Ribosome biogenesis</keyword>
<keyword id="KW-0694">RNA-binding</keyword>
<keyword id="KW-0699">rRNA-binding</keyword>
<keyword id="KW-0862">Zinc</keyword>
<dbReference type="EC" id="3.6.1.-" evidence="1"/>
<dbReference type="EMBL" id="BX936398">
    <property type="protein sequence ID" value="CAH19657.1"/>
    <property type="molecule type" value="Genomic_DNA"/>
</dbReference>
<dbReference type="RefSeq" id="WP_002209142.1">
    <property type="nucleotide sequence ID" value="NZ_CP009712.1"/>
</dbReference>
<dbReference type="SMR" id="Q66FC3"/>
<dbReference type="GeneID" id="57974243"/>
<dbReference type="KEGG" id="ypo:BZ17_2152"/>
<dbReference type="KEGG" id="yps:YPTB0417"/>
<dbReference type="PATRIC" id="fig|273123.14.peg.2276"/>
<dbReference type="Proteomes" id="UP000001011">
    <property type="component" value="Chromosome"/>
</dbReference>
<dbReference type="GO" id="GO:0005737">
    <property type="term" value="C:cytoplasm"/>
    <property type="evidence" value="ECO:0007669"/>
    <property type="project" value="UniProtKB-SubCell"/>
</dbReference>
<dbReference type="GO" id="GO:0005525">
    <property type="term" value="F:GTP binding"/>
    <property type="evidence" value="ECO:0007669"/>
    <property type="project" value="UniProtKB-UniRule"/>
</dbReference>
<dbReference type="GO" id="GO:0003924">
    <property type="term" value="F:GTPase activity"/>
    <property type="evidence" value="ECO:0007669"/>
    <property type="project" value="UniProtKB-UniRule"/>
</dbReference>
<dbReference type="GO" id="GO:0046872">
    <property type="term" value="F:metal ion binding"/>
    <property type="evidence" value="ECO:0007669"/>
    <property type="project" value="UniProtKB-KW"/>
</dbReference>
<dbReference type="GO" id="GO:0019843">
    <property type="term" value="F:rRNA binding"/>
    <property type="evidence" value="ECO:0007669"/>
    <property type="project" value="UniProtKB-KW"/>
</dbReference>
<dbReference type="GO" id="GO:0042274">
    <property type="term" value="P:ribosomal small subunit biogenesis"/>
    <property type="evidence" value="ECO:0007669"/>
    <property type="project" value="UniProtKB-UniRule"/>
</dbReference>
<dbReference type="CDD" id="cd01854">
    <property type="entry name" value="YjeQ_EngC"/>
    <property type="match status" value="1"/>
</dbReference>
<dbReference type="Gene3D" id="2.40.50.140">
    <property type="entry name" value="Nucleic acid-binding proteins"/>
    <property type="match status" value="1"/>
</dbReference>
<dbReference type="Gene3D" id="3.40.50.300">
    <property type="entry name" value="P-loop containing nucleotide triphosphate hydrolases"/>
    <property type="match status" value="1"/>
</dbReference>
<dbReference type="Gene3D" id="1.10.40.50">
    <property type="entry name" value="Probable gtpase engc, domain 3"/>
    <property type="match status" value="1"/>
</dbReference>
<dbReference type="HAMAP" id="MF_01820">
    <property type="entry name" value="GTPase_RsgA"/>
    <property type="match status" value="1"/>
</dbReference>
<dbReference type="InterPro" id="IPR030378">
    <property type="entry name" value="G_CP_dom"/>
</dbReference>
<dbReference type="InterPro" id="IPR012340">
    <property type="entry name" value="NA-bd_OB-fold"/>
</dbReference>
<dbReference type="InterPro" id="IPR027417">
    <property type="entry name" value="P-loop_NTPase"/>
</dbReference>
<dbReference type="InterPro" id="IPR004881">
    <property type="entry name" value="Ribosome_biogen_GTPase_RsgA"/>
</dbReference>
<dbReference type="InterPro" id="IPR010914">
    <property type="entry name" value="RsgA_GTPase_dom"/>
</dbReference>
<dbReference type="NCBIfam" id="NF008931">
    <property type="entry name" value="PRK12288.1"/>
    <property type="match status" value="1"/>
</dbReference>
<dbReference type="NCBIfam" id="TIGR00157">
    <property type="entry name" value="ribosome small subunit-dependent GTPase A"/>
    <property type="match status" value="1"/>
</dbReference>
<dbReference type="PANTHER" id="PTHR32120">
    <property type="entry name" value="SMALL RIBOSOMAL SUBUNIT BIOGENESIS GTPASE RSGA"/>
    <property type="match status" value="1"/>
</dbReference>
<dbReference type="PANTHER" id="PTHR32120:SF11">
    <property type="entry name" value="SMALL RIBOSOMAL SUBUNIT BIOGENESIS GTPASE RSGA 1, MITOCHONDRIAL-RELATED"/>
    <property type="match status" value="1"/>
</dbReference>
<dbReference type="Pfam" id="PF03193">
    <property type="entry name" value="RsgA_GTPase"/>
    <property type="match status" value="1"/>
</dbReference>
<dbReference type="SUPFAM" id="SSF52540">
    <property type="entry name" value="P-loop containing nucleoside triphosphate hydrolases"/>
    <property type="match status" value="1"/>
</dbReference>
<dbReference type="PROSITE" id="PS50936">
    <property type="entry name" value="ENGC_GTPASE"/>
    <property type="match status" value="1"/>
</dbReference>
<dbReference type="PROSITE" id="PS51721">
    <property type="entry name" value="G_CP"/>
    <property type="match status" value="1"/>
</dbReference>
<evidence type="ECO:0000255" key="1">
    <source>
        <dbReference type="HAMAP-Rule" id="MF_01820"/>
    </source>
</evidence>
<evidence type="ECO:0000255" key="2">
    <source>
        <dbReference type="PROSITE-ProRule" id="PRU01058"/>
    </source>
</evidence>
<evidence type="ECO:0000256" key="3">
    <source>
        <dbReference type="SAM" id="MobiDB-lite"/>
    </source>
</evidence>